<accession>Q63744</accession>
<gene>
    <name type="primary">Dlc1</name>
    <name type="synonym">Arhgap7</name>
    <name type="synonym">Rhogap</name>
    <name type="synonym">Stard12</name>
</gene>
<dbReference type="EMBL" id="D31962">
    <property type="protein sequence ID" value="BAA21675.1"/>
    <property type="status" value="ALT_INIT"/>
    <property type="molecule type" value="mRNA"/>
</dbReference>
<dbReference type="SMR" id="Q63744"/>
<dbReference type="FunCoup" id="Q63744">
    <property type="interactions" value="420"/>
</dbReference>
<dbReference type="STRING" id="10116.ENSRNOP00000075006"/>
<dbReference type="GlyGen" id="Q63744">
    <property type="glycosylation" value="1 site"/>
</dbReference>
<dbReference type="iPTMnet" id="Q63744"/>
<dbReference type="PhosphoSitePlus" id="Q63744"/>
<dbReference type="PaxDb" id="10116-ENSRNOP00000014923"/>
<dbReference type="AGR" id="RGD:68416"/>
<dbReference type="RGD" id="68416">
    <property type="gene designation" value="Dlc1"/>
</dbReference>
<dbReference type="eggNOG" id="KOG2200">
    <property type="taxonomic scope" value="Eukaryota"/>
</dbReference>
<dbReference type="InParanoid" id="Q63744"/>
<dbReference type="PhylomeDB" id="Q63744"/>
<dbReference type="Reactome" id="R-RNO-8980692">
    <property type="pathway name" value="RHOA GTPase cycle"/>
</dbReference>
<dbReference type="Reactome" id="R-RNO-9013026">
    <property type="pathway name" value="RHOB GTPase cycle"/>
</dbReference>
<dbReference type="Reactome" id="R-RNO-9013148">
    <property type="pathway name" value="CDC42 GTPase cycle"/>
</dbReference>
<dbReference type="Reactome" id="R-RNO-9013149">
    <property type="pathway name" value="RAC1 GTPase cycle"/>
</dbReference>
<dbReference type="Reactome" id="R-RNO-9013406">
    <property type="pathway name" value="RHOQ GTPase cycle"/>
</dbReference>
<dbReference type="PRO" id="PR:Q63744"/>
<dbReference type="Proteomes" id="UP000002494">
    <property type="component" value="Unplaced"/>
</dbReference>
<dbReference type="GO" id="GO:0005884">
    <property type="term" value="C:actin filament"/>
    <property type="evidence" value="ECO:0000314"/>
    <property type="project" value="RGD"/>
</dbReference>
<dbReference type="GO" id="GO:0005901">
    <property type="term" value="C:caveola"/>
    <property type="evidence" value="ECO:0000266"/>
    <property type="project" value="RGD"/>
</dbReference>
<dbReference type="GO" id="GO:0030864">
    <property type="term" value="C:cortical actin cytoskeleton"/>
    <property type="evidence" value="ECO:0000266"/>
    <property type="project" value="RGD"/>
</dbReference>
<dbReference type="GO" id="GO:0005737">
    <property type="term" value="C:cytoplasm"/>
    <property type="evidence" value="ECO:0000266"/>
    <property type="project" value="RGD"/>
</dbReference>
<dbReference type="GO" id="GO:0005829">
    <property type="term" value="C:cytosol"/>
    <property type="evidence" value="ECO:0000266"/>
    <property type="project" value="RGD"/>
</dbReference>
<dbReference type="GO" id="GO:0005925">
    <property type="term" value="C:focal adhesion"/>
    <property type="evidence" value="ECO:0000314"/>
    <property type="project" value="RGD"/>
</dbReference>
<dbReference type="GO" id="GO:0045121">
    <property type="term" value="C:membrane raft"/>
    <property type="evidence" value="ECO:0000318"/>
    <property type="project" value="GO_Central"/>
</dbReference>
<dbReference type="GO" id="GO:0005634">
    <property type="term" value="C:nucleus"/>
    <property type="evidence" value="ECO:0000266"/>
    <property type="project" value="RGD"/>
</dbReference>
<dbReference type="GO" id="GO:0032587">
    <property type="term" value="C:ruffle membrane"/>
    <property type="evidence" value="ECO:0000266"/>
    <property type="project" value="RGD"/>
</dbReference>
<dbReference type="GO" id="GO:0001725">
    <property type="term" value="C:stress fiber"/>
    <property type="evidence" value="ECO:0000314"/>
    <property type="project" value="RGD"/>
</dbReference>
<dbReference type="GO" id="GO:0005096">
    <property type="term" value="F:GTPase activator activity"/>
    <property type="evidence" value="ECO:0000314"/>
    <property type="project" value="RGD"/>
</dbReference>
<dbReference type="GO" id="GO:0008289">
    <property type="term" value="F:lipid binding"/>
    <property type="evidence" value="ECO:0007669"/>
    <property type="project" value="InterPro"/>
</dbReference>
<dbReference type="GO" id="GO:0043274">
    <property type="term" value="F:phospholipase binding"/>
    <property type="evidence" value="ECO:0000353"/>
    <property type="project" value="RGD"/>
</dbReference>
<dbReference type="GO" id="GO:0160185">
    <property type="term" value="F:phospholipase C activator activity"/>
    <property type="evidence" value="ECO:0000314"/>
    <property type="project" value="RGD"/>
</dbReference>
<dbReference type="GO" id="GO:0042169">
    <property type="term" value="F:SH2 domain binding"/>
    <property type="evidence" value="ECO:0000266"/>
    <property type="project" value="RGD"/>
</dbReference>
<dbReference type="GO" id="GO:0017166">
    <property type="term" value="F:vinculin binding"/>
    <property type="evidence" value="ECO:0000353"/>
    <property type="project" value="RGD"/>
</dbReference>
<dbReference type="GO" id="GO:0030036">
    <property type="term" value="P:actin cytoskeleton organization"/>
    <property type="evidence" value="ECO:0000266"/>
    <property type="project" value="RGD"/>
</dbReference>
<dbReference type="GO" id="GO:0032869">
    <property type="term" value="P:cellular response to insulin stimulus"/>
    <property type="evidence" value="ECO:0000270"/>
    <property type="project" value="RGD"/>
</dbReference>
<dbReference type="GO" id="GO:0048041">
    <property type="term" value="P:focal adhesion assembly"/>
    <property type="evidence" value="ECO:0000266"/>
    <property type="project" value="RGD"/>
</dbReference>
<dbReference type="GO" id="GO:0030900">
    <property type="term" value="P:forebrain development"/>
    <property type="evidence" value="ECO:0000266"/>
    <property type="project" value="RGD"/>
</dbReference>
<dbReference type="GO" id="GO:0003007">
    <property type="term" value="P:heart morphogenesis"/>
    <property type="evidence" value="ECO:0000266"/>
    <property type="project" value="RGD"/>
</dbReference>
<dbReference type="GO" id="GO:0021575">
    <property type="term" value="P:hindbrain morphogenesis"/>
    <property type="evidence" value="ECO:0000266"/>
    <property type="project" value="RGD"/>
</dbReference>
<dbReference type="GO" id="GO:0035556">
    <property type="term" value="P:intracellular signal transduction"/>
    <property type="evidence" value="ECO:0000266"/>
    <property type="project" value="RGD"/>
</dbReference>
<dbReference type="GO" id="GO:0030336">
    <property type="term" value="P:negative regulation of cell migration"/>
    <property type="evidence" value="ECO:0000266"/>
    <property type="project" value="RGD"/>
</dbReference>
<dbReference type="GO" id="GO:0008285">
    <property type="term" value="P:negative regulation of cell population proliferation"/>
    <property type="evidence" value="ECO:0000250"/>
    <property type="project" value="UniProtKB"/>
</dbReference>
<dbReference type="GO" id="GO:0051895">
    <property type="term" value="P:negative regulation of focal adhesion assembly"/>
    <property type="evidence" value="ECO:0000266"/>
    <property type="project" value="RGD"/>
</dbReference>
<dbReference type="GO" id="GO:0035024">
    <property type="term" value="P:negative regulation of Rho protein signal transduction"/>
    <property type="evidence" value="ECO:0000266"/>
    <property type="project" value="RGD"/>
</dbReference>
<dbReference type="GO" id="GO:0051497">
    <property type="term" value="P:negative regulation of stress fiber assembly"/>
    <property type="evidence" value="ECO:0000266"/>
    <property type="project" value="RGD"/>
</dbReference>
<dbReference type="GO" id="GO:0001843">
    <property type="term" value="P:neural tube closure"/>
    <property type="evidence" value="ECO:0000266"/>
    <property type="project" value="RGD"/>
</dbReference>
<dbReference type="GO" id="GO:1900119">
    <property type="term" value="P:positive regulation of execution phase of apoptosis"/>
    <property type="evidence" value="ECO:0000266"/>
    <property type="project" value="RGD"/>
</dbReference>
<dbReference type="GO" id="GO:0035023">
    <property type="term" value="P:regulation of Rho protein signal transduction"/>
    <property type="evidence" value="ECO:0000318"/>
    <property type="project" value="GO_Central"/>
</dbReference>
<dbReference type="CDD" id="cd04375">
    <property type="entry name" value="RhoGAP_DLC1"/>
    <property type="match status" value="1"/>
</dbReference>
<dbReference type="CDD" id="cd09591">
    <property type="entry name" value="SAM_DLC1"/>
    <property type="match status" value="1"/>
</dbReference>
<dbReference type="FunFam" id="3.30.530.20:FF:000010">
    <property type="entry name" value="rho GTPase-activating protein 7 isoform X1"/>
    <property type="match status" value="1"/>
</dbReference>
<dbReference type="FunFam" id="1.10.555.10:FF:000007">
    <property type="entry name" value="rho GTPase-activating protein 7 isoform X2"/>
    <property type="match status" value="1"/>
</dbReference>
<dbReference type="FunFam" id="1.10.287.2070:FF:000001">
    <property type="entry name" value="StAR-related lipid transfer domain-containing 13"/>
    <property type="match status" value="1"/>
</dbReference>
<dbReference type="Gene3D" id="1.10.287.2070">
    <property type="match status" value="1"/>
</dbReference>
<dbReference type="Gene3D" id="3.30.530.20">
    <property type="match status" value="1"/>
</dbReference>
<dbReference type="Gene3D" id="1.10.555.10">
    <property type="entry name" value="Rho GTPase activation protein"/>
    <property type="match status" value="1"/>
</dbReference>
<dbReference type="InterPro" id="IPR008936">
    <property type="entry name" value="Rho_GTPase_activation_prot"/>
</dbReference>
<dbReference type="InterPro" id="IPR000198">
    <property type="entry name" value="RhoGAP_dom"/>
</dbReference>
<dbReference type="InterPro" id="IPR001660">
    <property type="entry name" value="SAM"/>
</dbReference>
<dbReference type="InterPro" id="IPR013761">
    <property type="entry name" value="SAM/pointed_sf"/>
</dbReference>
<dbReference type="InterPro" id="IPR023393">
    <property type="entry name" value="START-like_dom_sf"/>
</dbReference>
<dbReference type="InterPro" id="IPR002913">
    <property type="entry name" value="START_lipid-bd_dom"/>
</dbReference>
<dbReference type="PANTHER" id="PTHR12659:SF2">
    <property type="entry name" value="RHO GTPASE-ACTIVATING PROTEIN 7"/>
    <property type="match status" value="1"/>
</dbReference>
<dbReference type="PANTHER" id="PTHR12659">
    <property type="entry name" value="RHO-TYPE GTPASE ACTIVATING PROTEIN"/>
    <property type="match status" value="1"/>
</dbReference>
<dbReference type="Pfam" id="PF00620">
    <property type="entry name" value="RhoGAP"/>
    <property type="match status" value="1"/>
</dbReference>
<dbReference type="Pfam" id="PF07647">
    <property type="entry name" value="SAM_2"/>
    <property type="match status" value="1"/>
</dbReference>
<dbReference type="Pfam" id="PF01852">
    <property type="entry name" value="START"/>
    <property type="match status" value="1"/>
</dbReference>
<dbReference type="SMART" id="SM00324">
    <property type="entry name" value="RhoGAP"/>
    <property type="match status" value="1"/>
</dbReference>
<dbReference type="SMART" id="SM00234">
    <property type="entry name" value="START"/>
    <property type="match status" value="1"/>
</dbReference>
<dbReference type="SUPFAM" id="SSF55961">
    <property type="entry name" value="Bet v1-like"/>
    <property type="match status" value="1"/>
</dbReference>
<dbReference type="SUPFAM" id="SSF48350">
    <property type="entry name" value="GTPase activation domain, GAP"/>
    <property type="match status" value="1"/>
</dbReference>
<dbReference type="SUPFAM" id="SSF47769">
    <property type="entry name" value="SAM/Pointed domain"/>
    <property type="match status" value="1"/>
</dbReference>
<dbReference type="PROSITE" id="PS50238">
    <property type="entry name" value="RHOGAP"/>
    <property type="match status" value="1"/>
</dbReference>
<dbReference type="PROSITE" id="PS50848">
    <property type="entry name" value="START"/>
    <property type="match status" value="1"/>
</dbReference>
<name>RHG07_RAT</name>
<keyword id="KW-0965">Cell junction</keyword>
<keyword id="KW-0963">Cytoplasm</keyword>
<keyword id="KW-0343">GTPase activation</keyword>
<keyword id="KW-0472">Membrane</keyword>
<keyword id="KW-0597">Phosphoprotein</keyword>
<keyword id="KW-1185">Reference proteome</keyword>
<keyword id="KW-0043">Tumor suppressor</keyword>
<sequence length="1091" mass="123414">MCRDEPDTMILTQIEAKEACDWLRVTGFPQYAQLYEDLLFPIDIALVKREHDFLDRDAIEALCRRLNTLNKCAVMKLEISPHRKRSEDSDEEEPCAISGKWTFQRDSKRWSRLEEFDVFSPKQDPIPGSPDNSRLQSATSRESMLTDLSEHQEVSSIRSLSSTSSSAPTHVPHSGEATTPRTNSVISVCSSSHFVGNEDSFSSLPSPKELSSFSFSMKGHEKNTKSKTRSLLKRMESLKLKGSHHSKHKAPSKLGLIISAPILQEGMDEEKLKQLNCVEISALNGNHINVPMVRKRSVSNSTQTSSSSSQSETSSAVSTPSPVTRTRSLSTCNKRVGMYLEGFDPFSQSAFNNVTEQNYKNRESYPEDTVFYIPEDHKPGTFPKALSNGSFCPSGNSSVNWRTGSFHGPGHLSLRRENSSDSPKELKRRNSSSSVSSRMSIYDNVPGSILYSSSGELADLENEDIFPELDDILYHVKGMQRIVNQWSEKFSDEGDSDSALDSVSPCPSSPKQIHLDVDHDRRTPSDLDSTGNSLNEPEEPTDIPERRDSGVGASLTRCNRHRLRWHSFQSSHRPSLNSVSLQINCQSVAQMNLLQKYSLLKLTALLEKYTPSNKHGFSWAVPKFMKRIKVPDYKDRSVFGVPLTVNVQRSGQPLPQSIQQAMRYLRNHCLDQVGLFRKSGVKSRIQALRQMNESAEDYVNYEGQSAYDVADMLKQYFRDLPEPLMTNKLSETFLQIYQYVPKDQRLQAIKAAIMLLPDENREVLQTLLYFLSHVTAAVKENQMTPTNLAVCLAPSLFHLNTLKRENSSPRVMQRKQSLGKPDQKDLNENLAATQGLAHMIAECKKLFQVPEEMSRCRNSYTEQELKPLTLEALGHLSNDQPADYRHFLQDCVDGLFKEVKEKFKGWVSYPTSEQAELSYKKVSEGPPLRLWRATIEVPAAPEEILKRLLKEQHLWDVDLLDSKVIEILDSQTEIYQYVQNSMAPHPARDYVVLRTWRTNLPRGACALLFTSVDHDRAPVAGVRVNVLLSRYLIEPCGSGKSKLTYMCRADLRGHMPEWYTKSFGHLCAAEVVKIRDSFSNQSTESKDTRSR</sequence>
<feature type="chain" id="PRO_0000056709" description="Rho GTPase-activating protein 7">
    <location>
        <begin position="1"/>
        <end position="1091"/>
    </location>
</feature>
<feature type="domain" description="SAM">
    <location>
        <begin position="11"/>
        <end position="78"/>
    </location>
</feature>
<feature type="domain" description="Rho-GAP" evidence="3">
    <location>
        <begin position="641"/>
        <end position="847"/>
    </location>
</feature>
<feature type="domain" description="START" evidence="4">
    <location>
        <begin position="877"/>
        <end position="1084"/>
    </location>
</feature>
<feature type="region of interest" description="Disordered" evidence="5">
    <location>
        <begin position="120"/>
        <end position="181"/>
    </location>
</feature>
<feature type="region of interest" description="Focal adhesion-targeting (FAT)" evidence="1">
    <location>
        <begin position="274"/>
        <end position="447"/>
    </location>
</feature>
<feature type="region of interest" description="Disordered" evidence="5">
    <location>
        <begin position="296"/>
        <end position="329"/>
    </location>
</feature>
<feature type="region of interest" description="Disordered" evidence="5">
    <location>
        <begin position="402"/>
        <end position="439"/>
    </location>
</feature>
<feature type="region of interest" description="Disordered" evidence="5">
    <location>
        <begin position="491"/>
        <end position="552"/>
    </location>
</feature>
<feature type="region of interest" description="Polybasic cluster (PBR)" evidence="1">
    <location>
        <begin position="614"/>
        <end position="636"/>
    </location>
</feature>
<feature type="compositionally biased region" description="Polar residues" evidence="5">
    <location>
        <begin position="130"/>
        <end position="143"/>
    </location>
</feature>
<feature type="compositionally biased region" description="Low complexity" evidence="5">
    <location>
        <begin position="155"/>
        <end position="166"/>
    </location>
</feature>
<feature type="compositionally biased region" description="Low complexity" evidence="5">
    <location>
        <begin position="298"/>
        <end position="324"/>
    </location>
</feature>
<feature type="compositionally biased region" description="Basic and acidic residues" evidence="5">
    <location>
        <begin position="414"/>
        <end position="425"/>
    </location>
</feature>
<feature type="compositionally biased region" description="Polar residues" evidence="5">
    <location>
        <begin position="499"/>
        <end position="511"/>
    </location>
</feature>
<feature type="compositionally biased region" description="Basic and acidic residues" evidence="5">
    <location>
        <begin position="513"/>
        <end position="525"/>
    </location>
</feature>
<feature type="compositionally biased region" description="Polar residues" evidence="5">
    <location>
        <begin position="526"/>
        <end position="535"/>
    </location>
</feature>
<feature type="site" description="Arginine finger; crucial for GTP hydrolysis by stabilizing the transition state" evidence="3">
    <location>
        <position position="677"/>
    </location>
</feature>
<feature type="modified residue" description="Phosphoserine" evidence="2">
    <location>
        <position position="86"/>
    </location>
</feature>
<feature type="modified residue" description="Phosphoserine" evidence="2">
    <location>
        <position position="89"/>
    </location>
</feature>
<feature type="modified residue" description="Phosphoserine" evidence="8">
    <location>
        <position position="129"/>
    </location>
</feature>
<feature type="modified residue" description="Phosphoserine" evidence="2">
    <location>
        <position position="321"/>
    </location>
</feature>
<feature type="mutagenesis site" description="Loss of activity." evidence="6">
    <original>R</original>
    <variation>E</variation>
    <location>
        <position position="677"/>
    </location>
</feature>
<feature type="mutagenesis site" description="Loss of activity." evidence="6">
    <original>K</original>
    <variation>E</variation>
    <location>
        <position position="714"/>
    </location>
</feature>
<feature type="mutagenesis site" description="Loss of activity." evidence="6">
    <original>R</original>
    <variation>E</variation>
    <location>
        <position position="718"/>
    </location>
</feature>
<feature type="mutagenesis site" description="No loss of activity." evidence="6">
    <original>N</original>
    <variation>V</variation>
    <location>
        <position position="787"/>
    </location>
</feature>
<protein>
    <recommendedName>
        <fullName>Rho GTPase-activating protein 7</fullName>
    </recommendedName>
    <alternativeName>
        <fullName>Deleted in liver cancer 1 protein homolog</fullName>
        <shortName>DLC-1</shortName>
    </alternativeName>
    <alternativeName>
        <fullName>Rho-type GTPase-activating protein 7</fullName>
    </alternativeName>
    <alternativeName>
        <fullName>START domain-containing protein 12</fullName>
        <shortName>StARD12</shortName>
    </alternativeName>
    <alternativeName>
        <fullName>StAR-related lipid transfer protein 12</fullName>
    </alternativeName>
    <alternativeName>
        <fullName>p122-RhoGAP</fullName>
    </alternativeName>
</protein>
<comment type="function">
    <text evidence="2 6">Functions as a GTPase-activating protein for the small GTPases RHOA, RHOB, RHOC and CDC42, terminating their downstream signaling. This induces morphological changes and detachment through cytoskeletal reorganization, playing a critical role in biological processes such as cell migration and proliferation. Also functions in vivo as an activator of the phospholipase PLCD1. Active DLC1 increases cell migration velocity but reduces directionality (By similarity). Required for growth factor-induced epithelial cell migration; in resting cells, interacts with TNS3 while PTEN interacts with the p85 regulatory subunit of the PI3K kinase complex but growth factor stimulation induces phosphorylation of TNS3 and PTEN, causing them to change their binding preference so that PTEN interacts with DLC1 and TNS3 interacts with p85 (By similarity). The PTEN-DLC1 complex translocates to the posterior of migrating cells to activate RHOA while the TNS3-p85 complex translocates to the leading edge of migrating cells to promote RAC1 activation (By similarity).</text>
</comment>
<comment type="subunit">
    <text evidence="2">Interacts with EF1A1, facilitates EF1A1 distribution to the membrane periphery and ruffles upon growth factor stimulation and suppresses cell migration. Interacts with tensin TNS1 (via N-terminus); the interaction is decreased by phosphorylation of TNS1. Interacts with TNS3 and PTEN; in resting cells, interacts with TNS3 (via C2 tensin-type domain) but, following growth factor stimulation, TNS3 and PTEN are phosphorylated which leads to weakened interaction with TNS3 and enhanced interaction with PTEN. Interacts (via C-terminus) with tensin TNS4 (via SH2 domain); the interaction is independent of tyrosine phosphorylation of DLC1.</text>
</comment>
<comment type="subcellular location">
    <subcellularLocation>
        <location evidence="1">Cytoplasm</location>
    </subcellularLocation>
    <subcellularLocation>
        <location evidence="2">Cell junction</location>
        <location evidence="2">Focal adhesion</location>
    </subcellularLocation>
    <subcellularLocation>
        <location evidence="1">Membrane</location>
        <topology evidence="1">Peripheral membrane protein</topology>
    </subcellularLocation>
    <text evidence="1">Colocalizes with EF1A1 at actin-rich regions in the cell periphery.</text>
</comment>
<comment type="domain">
    <text evidence="1">The SAM domain mediates interaction with EF1A1, and functions as an autoinhibitory regulator of RhoGAP Activity.</text>
</comment>
<comment type="domain">
    <text evidence="1">The polybasic cluster is required for activation and mediates binding to phosphatidylinositol-4,5-bisphosphate (PI(4,5)P(2)) containing membranes.</text>
</comment>
<comment type="sequence caution" evidence="7">
    <conflict type="erroneous initiation">
        <sequence resource="EMBL-CDS" id="BAA21675"/>
    </conflict>
</comment>
<evidence type="ECO:0000250" key="1"/>
<evidence type="ECO:0000250" key="2">
    <source>
        <dbReference type="UniProtKB" id="Q96QB1"/>
    </source>
</evidence>
<evidence type="ECO:0000255" key="3">
    <source>
        <dbReference type="PROSITE-ProRule" id="PRU00172"/>
    </source>
</evidence>
<evidence type="ECO:0000255" key="4">
    <source>
        <dbReference type="PROSITE-ProRule" id="PRU00197"/>
    </source>
</evidence>
<evidence type="ECO:0000256" key="5">
    <source>
        <dbReference type="SAM" id="MobiDB-lite"/>
    </source>
</evidence>
<evidence type="ECO:0000269" key="6">
    <source>
    </source>
</evidence>
<evidence type="ECO:0000305" key="7"/>
<evidence type="ECO:0007744" key="8">
    <source>
    </source>
</evidence>
<organism>
    <name type="scientific">Rattus norvegicus</name>
    <name type="common">Rat</name>
    <dbReference type="NCBI Taxonomy" id="10116"/>
    <lineage>
        <taxon>Eukaryota</taxon>
        <taxon>Metazoa</taxon>
        <taxon>Chordata</taxon>
        <taxon>Craniata</taxon>
        <taxon>Vertebrata</taxon>
        <taxon>Euteleostomi</taxon>
        <taxon>Mammalia</taxon>
        <taxon>Eutheria</taxon>
        <taxon>Euarchontoglires</taxon>
        <taxon>Glires</taxon>
        <taxon>Rodentia</taxon>
        <taxon>Myomorpha</taxon>
        <taxon>Muroidea</taxon>
        <taxon>Muridae</taxon>
        <taxon>Murinae</taxon>
        <taxon>Rattus</taxon>
    </lineage>
</organism>
<reference key="1">
    <citation type="journal article" date="1995" name="EMBO J.">
        <title>A dual functional signal mediator showing RhoGAP and phospholipase C-delta stimulating activities.</title>
        <authorList>
            <person name="Homma Y."/>
            <person name="Emori Y."/>
        </authorList>
    </citation>
    <scope>NUCLEOTIDE SEQUENCE [MRNA]</scope>
    <source>
        <tissue>Brain</tissue>
    </source>
</reference>
<reference key="2">
    <citation type="journal article" date="1999" name="J. Biol. Chem.">
        <title>Morphological changes and detachment of adherent cells induced by p122, a GTPase-activating protein for Rho.</title>
        <authorList>
            <person name="Sekimata M."/>
            <person name="Kabuyama Y."/>
            <person name="Emori Y."/>
            <person name="Homma Y."/>
        </authorList>
    </citation>
    <scope>FUNCTION</scope>
    <scope>MUTAGENESIS OF ARG-677; LYS-714; ARG-718 AND ASN-787</scope>
</reference>
<reference key="3">
    <citation type="journal article" date="2012" name="Nat. Commun.">
        <title>Quantitative maps of protein phosphorylation sites across 14 different rat organs and tissues.</title>
        <authorList>
            <person name="Lundby A."/>
            <person name="Secher A."/>
            <person name="Lage K."/>
            <person name="Nordsborg N.B."/>
            <person name="Dmytriyev A."/>
            <person name="Lundby C."/>
            <person name="Olsen J.V."/>
        </authorList>
    </citation>
    <scope>PHOSPHORYLATION [LARGE SCALE ANALYSIS] AT SER-129</scope>
    <scope>IDENTIFICATION BY MASS SPECTROMETRY [LARGE SCALE ANALYSIS]</scope>
</reference>
<proteinExistence type="evidence at protein level"/>